<keyword id="KW-0021">Allosteric enzyme</keyword>
<keyword id="KW-0328">Glycosyltransferase</keyword>
<keyword id="KW-0342">GTP-binding</keyword>
<keyword id="KW-0460">Magnesium</keyword>
<keyword id="KW-0547">Nucleotide-binding</keyword>
<keyword id="KW-1185">Reference proteome</keyword>
<keyword id="KW-0808">Transferase</keyword>
<name>UPP_STRA5</name>
<proteinExistence type="inferred from homology"/>
<evidence type="ECO:0000255" key="1">
    <source>
        <dbReference type="HAMAP-Rule" id="MF_01218"/>
    </source>
</evidence>
<accession>P67399</accession>
<accession>Q8DYA4</accession>
<accession>Q8E3W9</accession>
<gene>
    <name evidence="1" type="primary">upp</name>
    <name type="ordered locus">SAG1586</name>
</gene>
<dbReference type="EC" id="2.4.2.9" evidence="1"/>
<dbReference type="EMBL" id="AE009948">
    <property type="protein sequence ID" value="AAN00450.1"/>
    <property type="molecule type" value="Genomic_DNA"/>
</dbReference>
<dbReference type="RefSeq" id="NP_688577.1">
    <property type="nucleotide sequence ID" value="NC_004116.1"/>
</dbReference>
<dbReference type="RefSeq" id="WP_000514490.1">
    <property type="nucleotide sequence ID" value="NC_004116.1"/>
</dbReference>
<dbReference type="SMR" id="P67399"/>
<dbReference type="STRING" id="208435.SAG1586"/>
<dbReference type="GeneID" id="66886432"/>
<dbReference type="KEGG" id="sag:SAG1586"/>
<dbReference type="PATRIC" id="fig|208435.3.peg.1596"/>
<dbReference type="HOGENOM" id="CLU_067096_2_2_9"/>
<dbReference type="OrthoDB" id="9781675at2"/>
<dbReference type="UniPathway" id="UPA00574">
    <property type="reaction ID" value="UER00636"/>
</dbReference>
<dbReference type="Proteomes" id="UP000000821">
    <property type="component" value="Chromosome"/>
</dbReference>
<dbReference type="GO" id="GO:0005525">
    <property type="term" value="F:GTP binding"/>
    <property type="evidence" value="ECO:0007669"/>
    <property type="project" value="UniProtKB-KW"/>
</dbReference>
<dbReference type="GO" id="GO:0000287">
    <property type="term" value="F:magnesium ion binding"/>
    <property type="evidence" value="ECO:0007669"/>
    <property type="project" value="UniProtKB-UniRule"/>
</dbReference>
<dbReference type="GO" id="GO:0004845">
    <property type="term" value="F:uracil phosphoribosyltransferase activity"/>
    <property type="evidence" value="ECO:0007669"/>
    <property type="project" value="UniProtKB-UniRule"/>
</dbReference>
<dbReference type="GO" id="GO:0044206">
    <property type="term" value="P:UMP salvage"/>
    <property type="evidence" value="ECO:0007669"/>
    <property type="project" value="UniProtKB-UniRule"/>
</dbReference>
<dbReference type="GO" id="GO:0006223">
    <property type="term" value="P:uracil salvage"/>
    <property type="evidence" value="ECO:0007669"/>
    <property type="project" value="InterPro"/>
</dbReference>
<dbReference type="CDD" id="cd06223">
    <property type="entry name" value="PRTases_typeI"/>
    <property type="match status" value="1"/>
</dbReference>
<dbReference type="FunFam" id="3.40.50.2020:FF:000003">
    <property type="entry name" value="Uracil phosphoribosyltransferase"/>
    <property type="match status" value="1"/>
</dbReference>
<dbReference type="Gene3D" id="3.40.50.2020">
    <property type="match status" value="1"/>
</dbReference>
<dbReference type="HAMAP" id="MF_01218_B">
    <property type="entry name" value="Upp_B"/>
    <property type="match status" value="1"/>
</dbReference>
<dbReference type="InterPro" id="IPR000836">
    <property type="entry name" value="PRibTrfase_dom"/>
</dbReference>
<dbReference type="InterPro" id="IPR029057">
    <property type="entry name" value="PRTase-like"/>
</dbReference>
<dbReference type="InterPro" id="IPR034332">
    <property type="entry name" value="Upp_B"/>
</dbReference>
<dbReference type="InterPro" id="IPR050054">
    <property type="entry name" value="UPRTase/APRTase"/>
</dbReference>
<dbReference type="InterPro" id="IPR005765">
    <property type="entry name" value="Ura_phspho_trans"/>
</dbReference>
<dbReference type="NCBIfam" id="NF001097">
    <property type="entry name" value="PRK00129.1"/>
    <property type="match status" value="1"/>
</dbReference>
<dbReference type="NCBIfam" id="TIGR01091">
    <property type="entry name" value="upp"/>
    <property type="match status" value="1"/>
</dbReference>
<dbReference type="PANTHER" id="PTHR32315">
    <property type="entry name" value="ADENINE PHOSPHORIBOSYLTRANSFERASE"/>
    <property type="match status" value="1"/>
</dbReference>
<dbReference type="PANTHER" id="PTHR32315:SF4">
    <property type="entry name" value="URACIL PHOSPHORIBOSYLTRANSFERASE, CHLOROPLASTIC"/>
    <property type="match status" value="1"/>
</dbReference>
<dbReference type="Pfam" id="PF14681">
    <property type="entry name" value="UPRTase"/>
    <property type="match status" value="1"/>
</dbReference>
<dbReference type="SUPFAM" id="SSF53271">
    <property type="entry name" value="PRTase-like"/>
    <property type="match status" value="1"/>
</dbReference>
<comment type="function">
    <text evidence="1">Catalyzes the conversion of uracil and 5-phospho-alpha-D-ribose 1-diphosphate (PRPP) to UMP and diphosphate.</text>
</comment>
<comment type="catalytic activity">
    <reaction evidence="1">
        <text>UMP + diphosphate = 5-phospho-alpha-D-ribose 1-diphosphate + uracil</text>
        <dbReference type="Rhea" id="RHEA:13017"/>
        <dbReference type="ChEBI" id="CHEBI:17568"/>
        <dbReference type="ChEBI" id="CHEBI:33019"/>
        <dbReference type="ChEBI" id="CHEBI:57865"/>
        <dbReference type="ChEBI" id="CHEBI:58017"/>
        <dbReference type="EC" id="2.4.2.9"/>
    </reaction>
</comment>
<comment type="cofactor">
    <cofactor evidence="1">
        <name>Mg(2+)</name>
        <dbReference type="ChEBI" id="CHEBI:18420"/>
    </cofactor>
    <text evidence="1">Binds 1 Mg(2+) ion per subunit. The magnesium is bound as Mg-PRPP.</text>
</comment>
<comment type="activity regulation">
    <text evidence="1">Allosterically activated by GTP.</text>
</comment>
<comment type="pathway">
    <text evidence="1">Pyrimidine metabolism; UMP biosynthesis via salvage pathway; UMP from uracil: step 1/1.</text>
</comment>
<comment type="similarity">
    <text evidence="1">Belongs to the UPRTase family.</text>
</comment>
<reference key="1">
    <citation type="journal article" date="2002" name="Proc. Natl. Acad. Sci. U.S.A.">
        <title>Complete genome sequence and comparative genomic analysis of an emerging human pathogen, serotype V Streptococcus agalactiae.</title>
        <authorList>
            <person name="Tettelin H."/>
            <person name="Masignani V."/>
            <person name="Cieslewicz M.J."/>
            <person name="Eisen J.A."/>
            <person name="Peterson S.N."/>
            <person name="Wessels M.R."/>
            <person name="Paulsen I.T."/>
            <person name="Nelson K.E."/>
            <person name="Margarit I."/>
            <person name="Read T.D."/>
            <person name="Madoff L.C."/>
            <person name="Wolf A.M."/>
            <person name="Beanan M.J."/>
            <person name="Brinkac L.M."/>
            <person name="Daugherty S.C."/>
            <person name="DeBoy R.T."/>
            <person name="Durkin A.S."/>
            <person name="Kolonay J.F."/>
            <person name="Madupu R."/>
            <person name="Lewis M.R."/>
            <person name="Radune D."/>
            <person name="Fedorova N.B."/>
            <person name="Scanlan D."/>
            <person name="Khouri H.M."/>
            <person name="Mulligan S."/>
            <person name="Carty H.A."/>
            <person name="Cline R.T."/>
            <person name="Van Aken S.E."/>
            <person name="Gill J."/>
            <person name="Scarselli M."/>
            <person name="Mora M."/>
            <person name="Iacobini E.T."/>
            <person name="Brettoni C."/>
            <person name="Galli G."/>
            <person name="Mariani M."/>
            <person name="Vegni F."/>
            <person name="Maione D."/>
            <person name="Rinaudo D."/>
            <person name="Rappuoli R."/>
            <person name="Telford J.L."/>
            <person name="Kasper D.L."/>
            <person name="Grandi G."/>
            <person name="Fraser C.M."/>
        </authorList>
    </citation>
    <scope>NUCLEOTIDE SEQUENCE [LARGE SCALE GENOMIC DNA]</scope>
    <source>
        <strain>ATCC BAA-611 / 2603 V/R</strain>
    </source>
</reference>
<sequence length="209" mass="22735">MGKFQVISHPLIQHKLSILRRTTTSTKDFRELVDEIAMLMGYEVSRDLPLEDVEIQTPVATTVQKQLAGKKLAIVPILRAGIGMVDGFLSLVPAAKVGHIGMYRDEETFQPVEYLVKLPEDIDQRQIFVVDPMLATGGSAILAVDSLKKRGAASIKFVCLVAAPEGVAALQEAHPDVDIYTAALDEKLNEHGYIVPGLGDAGDRLFGTK</sequence>
<feature type="chain" id="PRO_0000120890" description="Uracil phosphoribosyltransferase">
    <location>
        <begin position="1"/>
        <end position="209"/>
    </location>
</feature>
<feature type="binding site" evidence="1">
    <location>
        <position position="79"/>
    </location>
    <ligand>
        <name>5-phospho-alpha-D-ribose 1-diphosphate</name>
        <dbReference type="ChEBI" id="CHEBI:58017"/>
    </ligand>
</feature>
<feature type="binding site" evidence="1">
    <location>
        <position position="104"/>
    </location>
    <ligand>
        <name>5-phospho-alpha-D-ribose 1-diphosphate</name>
        <dbReference type="ChEBI" id="CHEBI:58017"/>
    </ligand>
</feature>
<feature type="binding site" evidence="1">
    <location>
        <begin position="131"/>
        <end position="139"/>
    </location>
    <ligand>
        <name>5-phospho-alpha-D-ribose 1-diphosphate</name>
        <dbReference type="ChEBI" id="CHEBI:58017"/>
    </ligand>
</feature>
<feature type="binding site" evidence="1">
    <location>
        <position position="194"/>
    </location>
    <ligand>
        <name>uracil</name>
        <dbReference type="ChEBI" id="CHEBI:17568"/>
    </ligand>
</feature>
<feature type="binding site" evidence="1">
    <location>
        <begin position="199"/>
        <end position="201"/>
    </location>
    <ligand>
        <name>uracil</name>
        <dbReference type="ChEBI" id="CHEBI:17568"/>
    </ligand>
</feature>
<feature type="binding site" evidence="1">
    <location>
        <position position="200"/>
    </location>
    <ligand>
        <name>5-phospho-alpha-D-ribose 1-diphosphate</name>
        <dbReference type="ChEBI" id="CHEBI:58017"/>
    </ligand>
</feature>
<protein>
    <recommendedName>
        <fullName evidence="1">Uracil phosphoribosyltransferase</fullName>
        <ecNumber evidence="1">2.4.2.9</ecNumber>
    </recommendedName>
    <alternativeName>
        <fullName evidence="1">UMP pyrophosphorylase</fullName>
    </alternativeName>
    <alternativeName>
        <fullName evidence="1">UPRTase</fullName>
    </alternativeName>
</protein>
<organism>
    <name type="scientific">Streptococcus agalactiae serotype V (strain ATCC BAA-611 / 2603 V/R)</name>
    <dbReference type="NCBI Taxonomy" id="208435"/>
    <lineage>
        <taxon>Bacteria</taxon>
        <taxon>Bacillati</taxon>
        <taxon>Bacillota</taxon>
        <taxon>Bacilli</taxon>
        <taxon>Lactobacillales</taxon>
        <taxon>Streptococcaceae</taxon>
        <taxon>Streptococcus</taxon>
    </lineage>
</organism>